<dbReference type="EMBL" id="BC105344">
    <property type="protein sequence ID" value="AAI05345.1"/>
    <property type="molecule type" value="mRNA"/>
</dbReference>
<dbReference type="RefSeq" id="NP_001039342.1">
    <property type="nucleotide sequence ID" value="NM_001045877.1"/>
</dbReference>
<dbReference type="RefSeq" id="XP_005211850.1">
    <property type="nucleotide sequence ID" value="XM_005211793.3"/>
</dbReference>
<dbReference type="RefSeq" id="XP_005211851.1">
    <property type="nucleotide sequence ID" value="XM_005211794.3"/>
</dbReference>
<dbReference type="RefSeq" id="XP_010807631.1">
    <property type="nucleotide sequence ID" value="XM_010809329.2"/>
</dbReference>
<dbReference type="RefSeq" id="XP_010807633.1">
    <property type="nucleotide sequence ID" value="XM_010809331.2"/>
</dbReference>
<dbReference type="SMR" id="Q2KJH1"/>
<dbReference type="FunCoup" id="Q2KJH1">
    <property type="interactions" value="345"/>
</dbReference>
<dbReference type="STRING" id="9913.ENSBTAP00000004992"/>
<dbReference type="GlyCosmos" id="Q2KJH1">
    <property type="glycosylation" value="4 sites, No reported glycans"/>
</dbReference>
<dbReference type="GlyGen" id="Q2KJH1">
    <property type="glycosylation" value="4 sites"/>
</dbReference>
<dbReference type="PaxDb" id="9913-ENSBTAP00000004992"/>
<dbReference type="GeneID" id="407216"/>
<dbReference type="KEGG" id="bta:407216"/>
<dbReference type="CTD" id="652"/>
<dbReference type="VEuPathDB" id="HostDB:ENSBTAG00000003835"/>
<dbReference type="eggNOG" id="KOG3900">
    <property type="taxonomic scope" value="Eukaryota"/>
</dbReference>
<dbReference type="HOGENOM" id="CLU_020515_4_2_1"/>
<dbReference type="InParanoid" id="Q2KJH1"/>
<dbReference type="OMA" id="FQDVGWS"/>
<dbReference type="OrthoDB" id="5987191at2759"/>
<dbReference type="TreeFam" id="TF351789"/>
<dbReference type="Reactome" id="R-BTA-2129379">
    <property type="pathway name" value="Molecules associated with elastic fibres"/>
</dbReference>
<dbReference type="Reactome" id="R-BTA-381426">
    <property type="pathway name" value="Regulation of Insulin-like Growth Factor (IGF) transport and uptake by Insulin-like Growth Factor Binding Proteins (IGFBPs)"/>
</dbReference>
<dbReference type="Reactome" id="R-BTA-8957275">
    <property type="pathway name" value="Post-translational protein phosphorylation"/>
</dbReference>
<dbReference type="Proteomes" id="UP000009136">
    <property type="component" value="Chromosome 10"/>
</dbReference>
<dbReference type="Bgee" id="ENSBTAG00000003835">
    <property type="expression patterns" value="Expressed in fornix of vagina and 106 other cell types or tissues"/>
</dbReference>
<dbReference type="GO" id="GO:0005615">
    <property type="term" value="C:extracellular space"/>
    <property type="evidence" value="ECO:0000318"/>
    <property type="project" value="GO_Central"/>
</dbReference>
<dbReference type="GO" id="GO:0070700">
    <property type="term" value="F:BMP receptor binding"/>
    <property type="evidence" value="ECO:0000250"/>
    <property type="project" value="UniProtKB"/>
</dbReference>
<dbReference type="GO" id="GO:0042056">
    <property type="term" value="F:chemoattractant activity"/>
    <property type="evidence" value="ECO:0000250"/>
    <property type="project" value="UniProtKB"/>
</dbReference>
<dbReference type="GO" id="GO:0005125">
    <property type="term" value="F:cytokine activity"/>
    <property type="evidence" value="ECO:0000318"/>
    <property type="project" value="GO_Central"/>
</dbReference>
<dbReference type="GO" id="GO:0008083">
    <property type="term" value="F:growth factor activity"/>
    <property type="evidence" value="ECO:0007669"/>
    <property type="project" value="UniProtKB-KW"/>
</dbReference>
<dbReference type="GO" id="GO:0002043">
    <property type="term" value="P:blood vessel endothelial cell proliferation involved in sprouting angiogenesis"/>
    <property type="evidence" value="ECO:0000250"/>
    <property type="project" value="UniProtKB"/>
</dbReference>
<dbReference type="GO" id="GO:0030509">
    <property type="term" value="P:BMP signaling pathway"/>
    <property type="evidence" value="ECO:0000250"/>
    <property type="project" value="UniProtKB"/>
</dbReference>
<dbReference type="GO" id="GO:0001658">
    <property type="term" value="P:branching involved in ureteric bud morphogenesis"/>
    <property type="evidence" value="ECO:0000250"/>
    <property type="project" value="UniProtKB"/>
</dbReference>
<dbReference type="GO" id="GO:0002062">
    <property type="term" value="P:chondrocyte differentiation"/>
    <property type="evidence" value="ECO:0000250"/>
    <property type="project" value="UniProtKB"/>
</dbReference>
<dbReference type="GO" id="GO:0035993">
    <property type="term" value="P:deltoid tuberosity development"/>
    <property type="evidence" value="ECO:0000250"/>
    <property type="project" value="UniProtKB"/>
</dbReference>
<dbReference type="GO" id="GO:0001958">
    <property type="term" value="P:endochondral ossification"/>
    <property type="evidence" value="ECO:0000250"/>
    <property type="project" value="UniProtKB"/>
</dbReference>
<dbReference type="GO" id="GO:0072104">
    <property type="term" value="P:glomerular capillary formation"/>
    <property type="evidence" value="ECO:0000250"/>
    <property type="project" value="UniProtKB"/>
</dbReference>
<dbReference type="GO" id="GO:0003129">
    <property type="term" value="P:heart induction"/>
    <property type="evidence" value="ECO:0000250"/>
    <property type="project" value="UniProtKB"/>
</dbReference>
<dbReference type="GO" id="GO:0002244">
    <property type="term" value="P:hematopoietic progenitor cell differentiation"/>
    <property type="evidence" value="ECO:0000250"/>
    <property type="project" value="UniProtKB"/>
</dbReference>
<dbReference type="GO" id="GO:0048392">
    <property type="term" value="P:intermediate mesodermal cell differentiation"/>
    <property type="evidence" value="ECO:0000250"/>
    <property type="project" value="UniProtKB"/>
</dbReference>
<dbReference type="GO" id="GO:0001822">
    <property type="term" value="P:kidney development"/>
    <property type="evidence" value="ECO:0000250"/>
    <property type="project" value="UniProtKB"/>
</dbReference>
<dbReference type="GO" id="GO:0060426">
    <property type="term" value="P:lung vasculature development"/>
    <property type="evidence" value="ECO:0000250"/>
    <property type="project" value="UniProtKB"/>
</dbReference>
<dbReference type="GO" id="GO:0002320">
    <property type="term" value="P:lymphoid progenitor cell differentiation"/>
    <property type="evidence" value="ECO:0000250"/>
    <property type="project" value="UniProtKB"/>
</dbReference>
<dbReference type="GO" id="GO:0001823">
    <property type="term" value="P:mesonephros development"/>
    <property type="evidence" value="ECO:0000250"/>
    <property type="project" value="UniProtKB"/>
</dbReference>
<dbReference type="GO" id="GO:0090191">
    <property type="term" value="P:negative regulation of branching involved in ureteric bud morphogenesis"/>
    <property type="evidence" value="ECO:0000250"/>
    <property type="project" value="UniProtKB"/>
</dbReference>
<dbReference type="GO" id="GO:0045786">
    <property type="term" value="P:negative regulation of cell cycle"/>
    <property type="evidence" value="ECO:0000250"/>
    <property type="project" value="UniProtKB"/>
</dbReference>
<dbReference type="GO" id="GO:0008285">
    <property type="term" value="P:negative regulation of cell population proliferation"/>
    <property type="evidence" value="ECO:0000250"/>
    <property type="project" value="UniProtKB"/>
</dbReference>
<dbReference type="GO" id="GO:0072125">
    <property type="term" value="P:negative regulation of glomerular mesangial cell proliferation"/>
    <property type="evidence" value="ECO:0000250"/>
    <property type="project" value="UniProtKB"/>
</dbReference>
<dbReference type="GO" id="GO:0090194">
    <property type="term" value="P:negative regulation of glomerulus development"/>
    <property type="evidence" value="ECO:0000250"/>
    <property type="project" value="UniProtKB"/>
</dbReference>
<dbReference type="GO" id="GO:0033088">
    <property type="term" value="P:negative regulation of immature T cell proliferation in thymus"/>
    <property type="evidence" value="ECO:0000250"/>
    <property type="project" value="UniProtKB"/>
</dbReference>
<dbReference type="GO" id="GO:0072200">
    <property type="term" value="P:negative regulation of mesenchymal cell proliferation involved in ureter development"/>
    <property type="evidence" value="ECO:0000250"/>
    <property type="project" value="UniProtKB"/>
</dbReference>
<dbReference type="GO" id="GO:2000007">
    <property type="term" value="P:negative regulation of metanephric comma-shaped body morphogenesis"/>
    <property type="evidence" value="ECO:0000250"/>
    <property type="project" value="UniProtKB"/>
</dbReference>
<dbReference type="GO" id="GO:2000005">
    <property type="term" value="P:negative regulation of metanephric S-shaped body morphogenesis"/>
    <property type="evidence" value="ECO:0000250"/>
    <property type="project" value="UniProtKB"/>
</dbReference>
<dbReference type="GO" id="GO:0045839">
    <property type="term" value="P:negative regulation of mitotic nuclear division"/>
    <property type="evidence" value="ECO:0000250"/>
    <property type="project" value="UniProtKB"/>
</dbReference>
<dbReference type="GO" id="GO:0070244">
    <property type="term" value="P:negative regulation of thymocyte apoptotic process"/>
    <property type="evidence" value="ECO:0000250"/>
    <property type="project" value="UniProtKB"/>
</dbReference>
<dbReference type="GO" id="GO:0072179">
    <property type="term" value="P:nephric duct formation"/>
    <property type="evidence" value="ECO:0000250"/>
    <property type="project" value="UniProtKB"/>
</dbReference>
<dbReference type="GO" id="GO:0042476">
    <property type="term" value="P:odontogenesis"/>
    <property type="evidence" value="ECO:0000250"/>
    <property type="project" value="UniProtKB"/>
</dbReference>
<dbReference type="GO" id="GO:0001649">
    <property type="term" value="P:osteoblast differentiation"/>
    <property type="evidence" value="ECO:0000250"/>
    <property type="project" value="UniProtKB"/>
</dbReference>
<dbReference type="GO" id="GO:0050918">
    <property type="term" value="P:positive chemotaxis"/>
    <property type="evidence" value="ECO:0000250"/>
    <property type="project" value="UniProtKB"/>
</dbReference>
<dbReference type="GO" id="GO:0030513">
    <property type="term" value="P:positive regulation of BMP signaling pathway"/>
    <property type="evidence" value="ECO:0000250"/>
    <property type="project" value="UniProtKB"/>
</dbReference>
<dbReference type="GO" id="GO:0030501">
    <property type="term" value="P:positive regulation of bone mineralization"/>
    <property type="evidence" value="ECO:0000250"/>
    <property type="project" value="UniProtKB"/>
</dbReference>
<dbReference type="GO" id="GO:0061047">
    <property type="term" value="P:positive regulation of branching involved in lung morphogenesis"/>
    <property type="evidence" value="ECO:0000250"/>
    <property type="project" value="UniProtKB"/>
</dbReference>
<dbReference type="GO" id="GO:0055020">
    <property type="term" value="P:positive regulation of cardiac muscle fiber development"/>
    <property type="evidence" value="ECO:0000250"/>
    <property type="project" value="UniProtKB"/>
</dbReference>
<dbReference type="GO" id="GO:0008284">
    <property type="term" value="P:positive regulation of cell population proliferation"/>
    <property type="evidence" value="ECO:0000250"/>
    <property type="project" value="UniProtKB"/>
</dbReference>
<dbReference type="GO" id="GO:0032967">
    <property type="term" value="P:positive regulation of collagen biosynthetic process"/>
    <property type="evidence" value="ECO:0000250"/>
    <property type="project" value="UniProtKB"/>
</dbReference>
<dbReference type="GO" id="GO:0045893">
    <property type="term" value="P:positive regulation of DNA-templated transcription"/>
    <property type="evidence" value="ECO:0000250"/>
    <property type="project" value="UniProtKB"/>
</dbReference>
<dbReference type="GO" id="GO:0045606">
    <property type="term" value="P:positive regulation of epidermal cell differentiation"/>
    <property type="evidence" value="ECO:0000250"/>
    <property type="project" value="CAFA"/>
</dbReference>
<dbReference type="GO" id="GO:0050679">
    <property type="term" value="P:positive regulation of epithelial cell proliferation"/>
    <property type="evidence" value="ECO:0000250"/>
    <property type="project" value="UniProtKB"/>
</dbReference>
<dbReference type="GO" id="GO:1901331">
    <property type="term" value="P:positive regulation of odontoblast differentiation"/>
    <property type="evidence" value="ECO:0000250"/>
    <property type="project" value="UniProtKB"/>
</dbReference>
<dbReference type="GO" id="GO:0045669">
    <property type="term" value="P:positive regulation of osteoblast differentiation"/>
    <property type="evidence" value="ECO:0000250"/>
    <property type="project" value="UniProtKB"/>
</dbReference>
<dbReference type="GO" id="GO:1900182">
    <property type="term" value="P:positive regulation of protein localization to nucleus"/>
    <property type="evidence" value="ECO:0000250"/>
    <property type="project" value="UniProtKB"/>
</dbReference>
<dbReference type="GO" id="GO:0060391">
    <property type="term" value="P:positive regulation of SMAD protein signal transduction"/>
    <property type="evidence" value="ECO:0000250"/>
    <property type="project" value="UniProtKB"/>
</dbReference>
<dbReference type="GO" id="GO:0010453">
    <property type="term" value="P:regulation of cell fate commitment"/>
    <property type="evidence" value="ECO:0000250"/>
    <property type="project" value="CAFA"/>
</dbReference>
<dbReference type="GO" id="GO:0003139">
    <property type="term" value="P:secondary heart field specification"/>
    <property type="evidence" value="ECO:0000250"/>
    <property type="project" value="UniProtKB"/>
</dbReference>
<dbReference type="GO" id="GO:0048745">
    <property type="term" value="P:smooth muscle tissue development"/>
    <property type="evidence" value="ECO:0000250"/>
    <property type="project" value="UniProtKB"/>
</dbReference>
<dbReference type="GO" id="GO:0035990">
    <property type="term" value="P:tendon cell differentiation"/>
    <property type="evidence" value="ECO:0000250"/>
    <property type="project" value="UniProtKB"/>
</dbReference>
<dbReference type="GO" id="GO:0003323">
    <property type="term" value="P:type B pancreatic cell development"/>
    <property type="evidence" value="ECO:0000250"/>
    <property type="project" value="UniProtKB"/>
</dbReference>
<dbReference type="CDD" id="cd19391">
    <property type="entry name" value="TGF_beta_BMP4_BMP2B"/>
    <property type="match status" value="1"/>
</dbReference>
<dbReference type="FunFam" id="2.10.90.10:FF:000103">
    <property type="entry name" value="Bone morphogenetic protein 16"/>
    <property type="match status" value="1"/>
</dbReference>
<dbReference type="FunFam" id="2.60.120.970:FF:000005">
    <property type="entry name" value="Bone morphogenetic protein 4"/>
    <property type="match status" value="1"/>
</dbReference>
<dbReference type="Gene3D" id="2.60.120.970">
    <property type="match status" value="1"/>
</dbReference>
<dbReference type="Gene3D" id="2.10.90.10">
    <property type="entry name" value="Cystine-knot cytokines"/>
    <property type="match status" value="1"/>
</dbReference>
<dbReference type="InterPro" id="IPR047833">
    <property type="entry name" value="BMP4_TGF_beta-like"/>
</dbReference>
<dbReference type="InterPro" id="IPR029034">
    <property type="entry name" value="Cystine-knot_cytokine"/>
</dbReference>
<dbReference type="InterPro" id="IPR001839">
    <property type="entry name" value="TGF-b_C"/>
</dbReference>
<dbReference type="InterPro" id="IPR001111">
    <property type="entry name" value="TGF-b_propeptide"/>
</dbReference>
<dbReference type="InterPro" id="IPR015615">
    <property type="entry name" value="TGF-beta-rel"/>
</dbReference>
<dbReference type="InterPro" id="IPR017948">
    <property type="entry name" value="TGFb_CS"/>
</dbReference>
<dbReference type="PANTHER" id="PTHR11848:SF165">
    <property type="entry name" value="BONE MORPHOGENETIC PROTEIN 4"/>
    <property type="match status" value="1"/>
</dbReference>
<dbReference type="PANTHER" id="PTHR11848">
    <property type="entry name" value="TGF-BETA FAMILY"/>
    <property type="match status" value="1"/>
</dbReference>
<dbReference type="Pfam" id="PF00019">
    <property type="entry name" value="TGF_beta"/>
    <property type="match status" value="1"/>
</dbReference>
<dbReference type="Pfam" id="PF00688">
    <property type="entry name" value="TGFb_propeptide"/>
    <property type="match status" value="1"/>
</dbReference>
<dbReference type="SMART" id="SM00204">
    <property type="entry name" value="TGFB"/>
    <property type="match status" value="1"/>
</dbReference>
<dbReference type="SUPFAM" id="SSF57501">
    <property type="entry name" value="Cystine-knot cytokines"/>
    <property type="match status" value="1"/>
</dbReference>
<dbReference type="PROSITE" id="PS00250">
    <property type="entry name" value="TGF_BETA_1"/>
    <property type="match status" value="1"/>
</dbReference>
<dbReference type="PROSITE" id="PS51362">
    <property type="entry name" value="TGF_BETA_2"/>
    <property type="match status" value="1"/>
</dbReference>
<feature type="signal peptide" evidence="4">
    <location>
        <begin position="1"/>
        <end position="24"/>
    </location>
</feature>
<feature type="propeptide" id="PRO_0000244401" evidence="1">
    <location>
        <begin position="25"/>
        <end position="293"/>
    </location>
</feature>
<feature type="chain" id="PRO_0000244402" description="Bone morphogenetic protein 4">
    <location>
        <begin position="294"/>
        <end position="409"/>
    </location>
</feature>
<feature type="region of interest" description="Disordered" evidence="5">
    <location>
        <begin position="284"/>
        <end position="308"/>
    </location>
</feature>
<feature type="modified residue" description="Phosphoserine" evidence="2">
    <location>
        <position position="91"/>
    </location>
</feature>
<feature type="glycosylation site" description="N-linked (GlcNAc...) asparagine" evidence="4">
    <location>
        <position position="144"/>
    </location>
</feature>
<feature type="glycosylation site" description="N-linked (GlcNAc...) asparagine" evidence="4">
    <location>
        <position position="209"/>
    </location>
</feature>
<feature type="glycosylation site" description="N-linked (GlcNAc...) asparagine" evidence="4">
    <location>
        <position position="351"/>
    </location>
</feature>
<feature type="glycosylation site" description="N-linked (GlcNAc...) asparagine" evidence="4">
    <location>
        <position position="366"/>
    </location>
</feature>
<feature type="disulfide bond" evidence="1">
    <location>
        <begin position="309"/>
        <end position="374"/>
    </location>
</feature>
<feature type="disulfide bond" evidence="1">
    <location>
        <begin position="338"/>
        <end position="406"/>
    </location>
</feature>
<feature type="disulfide bond" evidence="1">
    <location>
        <begin position="342"/>
        <end position="408"/>
    </location>
</feature>
<feature type="disulfide bond" description="Interchain" evidence="1">
    <location>
        <position position="373"/>
    </location>
</feature>
<accession>Q2KJH1</accession>
<organism>
    <name type="scientific">Bos taurus</name>
    <name type="common">Bovine</name>
    <dbReference type="NCBI Taxonomy" id="9913"/>
    <lineage>
        <taxon>Eukaryota</taxon>
        <taxon>Metazoa</taxon>
        <taxon>Chordata</taxon>
        <taxon>Craniata</taxon>
        <taxon>Vertebrata</taxon>
        <taxon>Euteleostomi</taxon>
        <taxon>Mammalia</taxon>
        <taxon>Eutheria</taxon>
        <taxon>Laurasiatheria</taxon>
        <taxon>Artiodactyla</taxon>
        <taxon>Ruminantia</taxon>
        <taxon>Pecora</taxon>
        <taxon>Bovidae</taxon>
        <taxon>Bovinae</taxon>
        <taxon>Bos</taxon>
    </lineage>
</organism>
<proteinExistence type="evidence at transcript level"/>
<protein>
    <recommendedName>
        <fullName evidence="3">Bone morphogenetic protein 4</fullName>
        <shortName evidence="3">BMP-4</shortName>
    </recommendedName>
</protein>
<gene>
    <name evidence="3" type="primary">BMP4</name>
</gene>
<name>BMP4_BOVIN</name>
<evidence type="ECO:0000250" key="1"/>
<evidence type="ECO:0000250" key="2">
    <source>
        <dbReference type="UniProtKB" id="P12644"/>
    </source>
</evidence>
<evidence type="ECO:0000250" key="3">
    <source>
        <dbReference type="UniProtKB" id="P21275"/>
    </source>
</evidence>
<evidence type="ECO:0000255" key="4"/>
<evidence type="ECO:0000256" key="5">
    <source>
        <dbReference type="SAM" id="MobiDB-lite"/>
    </source>
</evidence>
<evidence type="ECO:0000305" key="6"/>
<keyword id="KW-0891">Chondrogenesis</keyword>
<keyword id="KW-0165">Cleavage on pair of basic residues</keyword>
<keyword id="KW-0202">Cytokine</keyword>
<keyword id="KW-0217">Developmental protein</keyword>
<keyword id="KW-0221">Differentiation</keyword>
<keyword id="KW-1015">Disulfide bond</keyword>
<keyword id="KW-0272">Extracellular matrix</keyword>
<keyword id="KW-0325">Glycoprotein</keyword>
<keyword id="KW-0339">Growth factor</keyword>
<keyword id="KW-0892">Osteogenesis</keyword>
<keyword id="KW-0597">Phosphoprotein</keyword>
<keyword id="KW-1185">Reference proteome</keyword>
<keyword id="KW-0964">Secreted</keyword>
<keyword id="KW-0732">Signal</keyword>
<comment type="function">
    <text evidence="2 3">Growth factor of the TGF-beta superfamily that plays essential roles in many developmental processes, including neurogenesis, vascular development, angiogenesis and osteogenesis (By similarity). Acts in concert with PTHLH/PTHRP to stimulate ductal outgrowth during embryonic mammary development and to inhibit hair follicle induction (By similarity). Initiates the canonical BMP signaling cascade by associating with type I receptor BMPR1A and type II receptor BMPR2. Once all three components are bound together in a complex at the cell surface, BMPR2 phosphorylates and activates BMPR1A. In turn, BMPR1A propagates signal by phosphorylating SMAD1/5/8 that travel to the nucleus and act as activators and repressors of transcription of target genes. Positively regulates the expression of odontogenic development regulator MSX1 via inducing the IPO7-mediated import of SMAD1 to the nucleus (By similarity). Required for MSX1-mediated mesenchymal molar tooth bud development beyond the bud stage, via promoting Wnt signaling (By similarity). Acts as a positive regulator of odontoblast differentiation during mesenchymal tooth germ formation, expression is repressed during the bell stage by MSX1-mediated inhibition of CTNNB1 signaling (By similarity). Able to induce its own expression in dental mesenchymal cells and also in the neighboring dental epithelial cells via an MSX1-mediated pathway (By similarity). Can also signal through non-canonical BMP pathways such as ERK/MAP kinase, PI3K/Akt, or SRC cascades. For example, induces SRC phosphorylation which, in turn, activates VEGFR2, leading to an angiogenic response (By similarity).</text>
</comment>
<comment type="subunit">
    <text evidence="2 3">Homodimer; disulfide-linked (By similarity). Interacts with GREM2. Part of a complex consisting of TWSG1 and CHRD. Interacts with the serine proteases, HTRA1 and HTRA3; the interaction with either inhibits BMP4-mediated signaling. The HTRA protease activity is required for this inhibition (By similarity). Interacts with SOSTDC1. Interacts with FBN1 (via N-terminal domain) and FBN2. Interacts with type I receptor BMPR1A. Interacts with type II receptor BMPR2. Interacts with FSTL1; this interaction inhibits the activation of the BMP4/Smad1/5/8 signaling pathway (By similarity). Interacts with SCUBE3 (By similarity). Interacts with TGFBR3 (By similarity).</text>
</comment>
<comment type="subcellular location">
    <subcellularLocation>
        <location evidence="1">Secreted</location>
        <location evidence="1">Extracellular space</location>
        <location evidence="1">Extracellular matrix</location>
    </subcellularLocation>
</comment>
<comment type="similarity">
    <text evidence="6">Belongs to the TGF-beta family.</text>
</comment>
<sequence>MIPGNRMLMVVLLCQVLLGGASHASLIPETGKKKVAEIQGHAGGRRSGQSHELLRDFEATLLQMFGLRRRPQPSKSAVIPDYMRDLYRLQSGEEEEEEQIQGIGLEYPERPASRANTVRSFHHEEHLENIPGTSENSAFRFLFNLSSIPENEVISSAELRLFREQVDQGPDWDQGFHRINIYEVMKPPAEVVPGHLITRLLDTRLVHHNVTRWETFDVSPAVLRWTREKQPNYGLAIEVTHLHQTRTHQGQHVRISRSLPQGSGDWAQLRPLLVTFGHDGRGHALTRRRRAKRSPKHHPQRARKKNKNCRRHSLYVDFSDVGWNDWIVAPPGYQAFYCHGDCPFPLADHLNSTNHAIVQTLVNSVNSSIPKACCVPTELSAISMLYLDEYDKVVLKNYQEMVVEGCGCR</sequence>
<reference key="1">
    <citation type="submission" date="2005-09" db="EMBL/GenBank/DDBJ databases">
        <authorList>
            <consortium name="NIH - Mammalian Gene Collection (MGC) project"/>
        </authorList>
    </citation>
    <scope>NUCLEOTIDE SEQUENCE [LARGE SCALE MRNA]</scope>
    <source>
        <strain>Crossbred X Angus</strain>
        <tissue>Ileum</tissue>
    </source>
</reference>